<accession>P11130</accession>
<organism>
    <name type="scientific">Pseudomonas phage phi6</name>
    <name type="common">Bacteriophage phi-6</name>
    <dbReference type="NCBI Taxonomy" id="2928686"/>
    <lineage>
        <taxon>Viruses</taxon>
        <taxon>Riboviria</taxon>
        <taxon>Orthornavirae</taxon>
        <taxon>Duplornaviricota</taxon>
        <taxon>Vidaverviricetes</taxon>
        <taxon>Mindivirales</taxon>
        <taxon>Cystoviridae</taxon>
        <taxon>Cystovirus</taxon>
        <taxon>Cystovirus phi6</taxon>
    </lineage>
</organism>
<name>P13_BPPH6</name>
<dbReference type="EMBL" id="M17462">
    <property type="protein sequence ID" value="AAA68486.1"/>
    <property type="molecule type" value="Genomic_RNA"/>
</dbReference>
<dbReference type="PIR" id="D28648">
    <property type="entry name" value="PNBPF6"/>
</dbReference>
<dbReference type="RefSeq" id="NP_620352.1">
    <property type="nucleotide sequence ID" value="NC_003716.1"/>
</dbReference>
<dbReference type="SMR" id="P11130"/>
<dbReference type="KEGG" id="vg:956442"/>
<dbReference type="Proteomes" id="UP000002610">
    <property type="component" value="Genome"/>
</dbReference>
<dbReference type="GO" id="GO:0016020">
    <property type="term" value="C:membrane"/>
    <property type="evidence" value="ECO:0007669"/>
    <property type="project" value="UniProtKB-KW"/>
</dbReference>
<dbReference type="GO" id="GO:0019031">
    <property type="term" value="C:viral envelope"/>
    <property type="evidence" value="ECO:0007669"/>
    <property type="project" value="UniProtKB-KW"/>
</dbReference>
<dbReference type="GO" id="GO:0055036">
    <property type="term" value="C:virion membrane"/>
    <property type="evidence" value="ECO:0007669"/>
    <property type="project" value="UniProtKB-SubCell"/>
</dbReference>
<sequence>MVPLKISTLESQLQPLVKLVATETPGALVAYARGLSSADRSRLYRLLRSLEQAIPKLSSAVVSATTLAARGL</sequence>
<protein>
    <recommendedName>
        <fullName>Protein P13</fullName>
    </recommendedName>
</protein>
<comment type="subcellular location">
    <subcellularLocation>
        <location evidence="1">Virion membrane</location>
    </subcellularLocation>
</comment>
<proteinExistence type="evidence at protein level"/>
<organismHost>
    <name type="scientific">Pseudomonas savastanoi pv. phaseolicola</name>
    <name type="common">Pseudomonas syringae pv. phaseolicola</name>
    <dbReference type="NCBI Taxonomy" id="319"/>
</organismHost>
<keyword id="KW-0903">Direct protein sequencing</keyword>
<keyword id="KW-0472">Membrane</keyword>
<keyword id="KW-1185">Reference proteome</keyword>
<keyword id="KW-0261">Viral envelope protein</keyword>
<keyword id="KW-0946">Virion</keyword>
<gene>
    <name type="primary">P13</name>
</gene>
<evidence type="ECO:0000305" key="1"/>
<reference key="1">
    <citation type="journal article" date="1988" name="Virology">
        <title>Nucleotide sequence of the middle dsRNA segment of bacteriophage phi 6: placement of the genes of membrane-associated proteins.</title>
        <authorList>
            <person name="Gottlieb P."/>
            <person name="Metzger S."/>
            <person name="Romantschuk M."/>
            <person name="Carton J."/>
            <person name="Strassman J."/>
            <person name="Bamford D.H."/>
            <person name="Kalkkinen N."/>
            <person name="Mindich L."/>
        </authorList>
    </citation>
    <scope>NUCLEOTIDE SEQUENCE [GENOMIC RNA]</scope>
    <scope>PROTEIN SEQUENCE OF 1-10</scope>
</reference>
<feature type="chain" id="PRO_0000164646" description="Protein P13">
    <location>
        <begin position="1"/>
        <end position="72"/>
    </location>
</feature>